<proteinExistence type="inferred from homology"/>
<organism>
    <name type="scientific">Haemophilus influenzae (strain ATCC 51907 / DSM 11121 / KW20 / Rd)</name>
    <dbReference type="NCBI Taxonomy" id="71421"/>
    <lineage>
        <taxon>Bacteria</taxon>
        <taxon>Pseudomonadati</taxon>
        <taxon>Pseudomonadota</taxon>
        <taxon>Gammaproteobacteria</taxon>
        <taxon>Pasteurellales</taxon>
        <taxon>Pasteurellaceae</taxon>
        <taxon>Haemophilus</taxon>
    </lineage>
</organism>
<name>Y561_HAEIN</name>
<sequence>MYLGLKVGVTFASSIPAAVISMAVLKFFKDSSILENNMVQTQASSAGTLSSVIFVLPGLLMMGYWQDFPFWQTMLICAAGGTLGVLFTIPLRRAMVVNSNLPYPEGVAAAEILKAGNHADGDSGVKDIAYGGVLAGLVAFLTNGLRVMADGASAWIQTGKAAFQLPMGFSLALLGAGYLIGIVGGIAMLIGVILTWGVAVPYFTMSEDIAADASLIDSAMTVWKTKVRYIGVGTIGIAAIWTLLILMKPMIEGMVHSFRMLKGGQEASEHRIDIDLSPKTMIYILIATVALIVISLHHFIAAAPISPELSILLVVVCTFLAVFIGFFVAAASGYMAGLVGSSSSPISGIGIISVIVISLVLVSIGNASGLFETVDGQKFLTALTLFTASIVITTACISNDNLQDLKTGLLVEATPWRQQVALIIGCFVGALVIAPVLEILYHAYGFSGALPRPDMDPSQALSAPQATLMTAISQGIFTNKLEWTYILTGVGLGAVLITIDAFLKKVSNKVFSLPVIAVGIGIYLPPSINTPVIVGAFLAWIMARHIAKLGNKEVSAKAERFGTLFSAGLIVGESLMGVILAFIIAASVTTGGSEAPLSLNLENWDTIGEWFGLIVFIVGIVIFASRVLRAKKI</sequence>
<accession>P44016</accession>
<keyword id="KW-1003">Cell membrane</keyword>
<keyword id="KW-0472">Membrane</keyword>
<keyword id="KW-0571">Peptide transport</keyword>
<keyword id="KW-0653">Protein transport</keyword>
<keyword id="KW-1185">Reference proteome</keyword>
<keyword id="KW-0812">Transmembrane</keyword>
<keyword id="KW-1133">Transmembrane helix</keyword>
<keyword id="KW-0813">Transport</keyword>
<protein>
    <recommendedName>
        <fullName>Putative oligopeptide transporter HI_0561</fullName>
    </recommendedName>
</protein>
<dbReference type="EMBL" id="L42023">
    <property type="protein sequence ID" value="AAC22215.1"/>
    <property type="molecule type" value="Genomic_DNA"/>
</dbReference>
<dbReference type="PIR" id="G64009">
    <property type="entry name" value="G64009"/>
</dbReference>
<dbReference type="RefSeq" id="NP_438718.1">
    <property type="nucleotide sequence ID" value="NC_000907.1"/>
</dbReference>
<dbReference type="SMR" id="P44016"/>
<dbReference type="STRING" id="71421.HI_0561"/>
<dbReference type="TCDB" id="2.A.67.4.1">
    <property type="family name" value="the oligopeptide transporter (opt) family"/>
</dbReference>
<dbReference type="EnsemblBacteria" id="AAC22215">
    <property type="protein sequence ID" value="AAC22215"/>
    <property type="gene ID" value="HI_0561"/>
</dbReference>
<dbReference type="KEGG" id="hin:HI_0561"/>
<dbReference type="PATRIC" id="fig|71421.8.peg.581"/>
<dbReference type="eggNOG" id="COG1297">
    <property type="taxonomic scope" value="Bacteria"/>
</dbReference>
<dbReference type="HOGENOM" id="CLU_018238_1_1_6"/>
<dbReference type="OrthoDB" id="9809340at2"/>
<dbReference type="PhylomeDB" id="P44016"/>
<dbReference type="BioCyc" id="HINF71421:G1GJ1-573-MONOMER"/>
<dbReference type="Proteomes" id="UP000000579">
    <property type="component" value="Chromosome"/>
</dbReference>
<dbReference type="GO" id="GO:0016020">
    <property type="term" value="C:membrane"/>
    <property type="evidence" value="ECO:0000318"/>
    <property type="project" value="GO_Central"/>
</dbReference>
<dbReference type="GO" id="GO:0005886">
    <property type="term" value="C:plasma membrane"/>
    <property type="evidence" value="ECO:0007669"/>
    <property type="project" value="UniProtKB-SubCell"/>
</dbReference>
<dbReference type="GO" id="GO:0035673">
    <property type="term" value="F:oligopeptide transmembrane transporter activity"/>
    <property type="evidence" value="ECO:0007669"/>
    <property type="project" value="InterPro"/>
</dbReference>
<dbReference type="GO" id="GO:0015031">
    <property type="term" value="P:protein transport"/>
    <property type="evidence" value="ECO:0007669"/>
    <property type="project" value="UniProtKB-KW"/>
</dbReference>
<dbReference type="InterPro" id="IPR004814">
    <property type="entry name" value="Oligopep_transpt"/>
</dbReference>
<dbReference type="InterPro" id="IPR004813">
    <property type="entry name" value="OPT"/>
</dbReference>
<dbReference type="InterPro" id="IPR045035">
    <property type="entry name" value="YSL-like"/>
</dbReference>
<dbReference type="NCBIfam" id="TIGR00733">
    <property type="entry name" value="OPT family oligopeptide transporter"/>
    <property type="match status" value="1"/>
</dbReference>
<dbReference type="NCBIfam" id="TIGR00728">
    <property type="entry name" value="OPT_sfam"/>
    <property type="match status" value="1"/>
</dbReference>
<dbReference type="PANTHER" id="PTHR31645">
    <property type="entry name" value="OLIGOPEPTIDE TRANSPORTER YGL114W-RELATED"/>
    <property type="match status" value="1"/>
</dbReference>
<dbReference type="PANTHER" id="PTHR31645:SF0">
    <property type="entry name" value="OLIGOPEPTIDE TRANSPORTER YGL114W-RELATED"/>
    <property type="match status" value="1"/>
</dbReference>
<dbReference type="Pfam" id="PF03169">
    <property type="entry name" value="OPT"/>
    <property type="match status" value="1"/>
</dbReference>
<comment type="subcellular location">
    <subcellularLocation>
        <location evidence="2">Cell membrane</location>
        <topology evidence="2">Multi-pass membrane protein</topology>
    </subcellularLocation>
</comment>
<comment type="similarity">
    <text evidence="2">Belongs to the oligopeptide OPT transporter family.</text>
</comment>
<reference key="1">
    <citation type="journal article" date="1995" name="Science">
        <title>Whole-genome random sequencing and assembly of Haemophilus influenzae Rd.</title>
        <authorList>
            <person name="Fleischmann R.D."/>
            <person name="Adams M.D."/>
            <person name="White O."/>
            <person name="Clayton R.A."/>
            <person name="Kirkness E.F."/>
            <person name="Kerlavage A.R."/>
            <person name="Bult C.J."/>
            <person name="Tomb J.-F."/>
            <person name="Dougherty B.A."/>
            <person name="Merrick J.M."/>
            <person name="McKenney K."/>
            <person name="Sutton G.G."/>
            <person name="FitzHugh W."/>
            <person name="Fields C.A."/>
            <person name="Gocayne J.D."/>
            <person name="Scott J.D."/>
            <person name="Shirley R."/>
            <person name="Liu L.-I."/>
            <person name="Glodek A."/>
            <person name="Kelley J.M."/>
            <person name="Weidman J.F."/>
            <person name="Phillips C.A."/>
            <person name="Spriggs T."/>
            <person name="Hedblom E."/>
            <person name="Cotton M.D."/>
            <person name="Utterback T.R."/>
            <person name="Hanna M.C."/>
            <person name="Nguyen D.T."/>
            <person name="Saudek D.M."/>
            <person name="Brandon R.C."/>
            <person name="Fine L.D."/>
            <person name="Fritchman J.L."/>
            <person name="Fuhrmann J.L."/>
            <person name="Geoghagen N.S.M."/>
            <person name="Gnehm C.L."/>
            <person name="McDonald L.A."/>
            <person name="Small K.V."/>
            <person name="Fraser C.M."/>
            <person name="Smith H.O."/>
            <person name="Venter J.C."/>
        </authorList>
    </citation>
    <scope>NUCLEOTIDE SEQUENCE [LARGE SCALE GENOMIC DNA]</scope>
    <source>
        <strain>ATCC 51907 / DSM 11121 / KW20 / Rd</strain>
    </source>
</reference>
<reference key="2">
    <citation type="submission" date="1996-09" db="EMBL/GenBank/DDBJ databases">
        <authorList>
            <person name="White O."/>
            <person name="Clayton R.A."/>
            <person name="Kerlavage A.R."/>
            <person name="Fleischmann R.D."/>
        </authorList>
    </citation>
    <scope>SEQUENCE REVISION</scope>
</reference>
<gene>
    <name type="ordered locus">HI_0561</name>
</gene>
<evidence type="ECO:0000255" key="1"/>
<evidence type="ECO:0000305" key="2"/>
<feature type="chain" id="PRO_0000213790" description="Putative oligopeptide transporter HI_0561">
    <location>
        <begin position="1"/>
        <end position="633"/>
    </location>
</feature>
<feature type="transmembrane region" description="Helical" evidence="1">
    <location>
        <begin position="8"/>
        <end position="28"/>
    </location>
</feature>
<feature type="transmembrane region" description="Helical" evidence="1">
    <location>
        <begin position="45"/>
        <end position="65"/>
    </location>
</feature>
<feature type="transmembrane region" description="Helical" evidence="1">
    <location>
        <begin position="70"/>
        <end position="90"/>
    </location>
</feature>
<feature type="transmembrane region" description="Helical" evidence="1">
    <location>
        <begin position="128"/>
        <end position="148"/>
    </location>
</feature>
<feature type="transmembrane region" description="Helical" evidence="1">
    <location>
        <begin position="180"/>
        <end position="200"/>
    </location>
</feature>
<feature type="transmembrane region" description="Helical" evidence="1">
    <location>
        <begin position="230"/>
        <end position="250"/>
    </location>
</feature>
<feature type="transmembrane region" description="Helical" evidence="1">
    <location>
        <begin position="281"/>
        <end position="301"/>
    </location>
</feature>
<feature type="transmembrane region" description="Helical" evidence="1">
    <location>
        <begin position="311"/>
        <end position="331"/>
    </location>
</feature>
<feature type="transmembrane region" description="Helical" evidence="1">
    <location>
        <begin position="345"/>
        <end position="365"/>
    </location>
</feature>
<feature type="transmembrane region" description="Helical" evidence="1">
    <location>
        <begin position="379"/>
        <end position="399"/>
    </location>
</feature>
<feature type="transmembrane region" description="Helical" evidence="1">
    <location>
        <begin position="420"/>
        <end position="440"/>
    </location>
</feature>
<feature type="transmembrane region" description="Helical" evidence="1">
    <location>
        <begin position="483"/>
        <end position="503"/>
    </location>
</feature>
<feature type="transmembrane region" description="Helical" evidence="1">
    <location>
        <begin position="515"/>
        <end position="535"/>
    </location>
</feature>
<feature type="transmembrane region" description="Helical" evidence="1">
    <location>
        <begin position="564"/>
        <end position="584"/>
    </location>
</feature>
<feature type="transmembrane region" description="Helical" evidence="1">
    <location>
        <begin position="604"/>
        <end position="624"/>
    </location>
</feature>